<name>DXS2_STRCO</name>
<gene>
    <name evidence="1" type="primary">dxs2</name>
    <name type="ordered locus">SCO6013</name>
    <name type="ORF">SC1C3.01</name>
    <name type="ORF">SC7B7.10</name>
</gene>
<evidence type="ECO:0000255" key="1">
    <source>
        <dbReference type="HAMAP-Rule" id="MF_00315"/>
    </source>
</evidence>
<accession>Q8CJP7</accession>
<protein>
    <recommendedName>
        <fullName evidence="1">1-deoxy-D-xylulose-5-phosphate synthase 2</fullName>
        <ecNumber evidence="1">2.2.1.7</ecNumber>
    </recommendedName>
    <alternativeName>
        <fullName evidence="1">1-deoxyxylulose-5-phosphate synthase 2</fullName>
        <shortName evidence="1">DXP synthase 2</shortName>
        <shortName evidence="1">DXPS 2</shortName>
    </alternativeName>
</protein>
<reference key="1">
    <citation type="journal article" date="2002" name="Nature">
        <title>Complete genome sequence of the model actinomycete Streptomyces coelicolor A3(2).</title>
        <authorList>
            <person name="Bentley S.D."/>
            <person name="Chater K.F."/>
            <person name="Cerdeno-Tarraga A.-M."/>
            <person name="Challis G.L."/>
            <person name="Thomson N.R."/>
            <person name="James K.D."/>
            <person name="Harris D.E."/>
            <person name="Quail M.A."/>
            <person name="Kieser H."/>
            <person name="Harper D."/>
            <person name="Bateman A."/>
            <person name="Brown S."/>
            <person name="Chandra G."/>
            <person name="Chen C.W."/>
            <person name="Collins M."/>
            <person name="Cronin A."/>
            <person name="Fraser A."/>
            <person name="Goble A."/>
            <person name="Hidalgo J."/>
            <person name="Hornsby T."/>
            <person name="Howarth S."/>
            <person name="Huang C.-H."/>
            <person name="Kieser T."/>
            <person name="Larke L."/>
            <person name="Murphy L.D."/>
            <person name="Oliver K."/>
            <person name="O'Neil S."/>
            <person name="Rabbinowitsch E."/>
            <person name="Rajandream M.A."/>
            <person name="Rutherford K.M."/>
            <person name="Rutter S."/>
            <person name="Seeger K."/>
            <person name="Saunders D."/>
            <person name="Sharp S."/>
            <person name="Squares R."/>
            <person name="Squares S."/>
            <person name="Taylor K."/>
            <person name="Warren T."/>
            <person name="Wietzorrek A."/>
            <person name="Woodward J.R."/>
            <person name="Barrell B.G."/>
            <person name="Parkhill J."/>
            <person name="Hopwood D.A."/>
        </authorList>
    </citation>
    <scope>NUCLEOTIDE SEQUENCE [LARGE SCALE GENOMIC DNA]</scope>
    <source>
        <strain>ATCC BAA-471 / A3(2) / M145</strain>
    </source>
</reference>
<proteinExistence type="inferred from homology"/>
<comment type="function">
    <text evidence="1">Catalyzes the acyloin condensation reaction between C atoms 2 and 3 of pyruvate and glyceraldehyde 3-phosphate to yield 1-deoxy-D-xylulose-5-phosphate (DXP).</text>
</comment>
<comment type="catalytic activity">
    <reaction evidence="1">
        <text>D-glyceraldehyde 3-phosphate + pyruvate + H(+) = 1-deoxy-D-xylulose 5-phosphate + CO2</text>
        <dbReference type="Rhea" id="RHEA:12605"/>
        <dbReference type="ChEBI" id="CHEBI:15361"/>
        <dbReference type="ChEBI" id="CHEBI:15378"/>
        <dbReference type="ChEBI" id="CHEBI:16526"/>
        <dbReference type="ChEBI" id="CHEBI:57792"/>
        <dbReference type="ChEBI" id="CHEBI:59776"/>
        <dbReference type="EC" id="2.2.1.7"/>
    </reaction>
</comment>
<comment type="cofactor">
    <cofactor evidence="1">
        <name>Mg(2+)</name>
        <dbReference type="ChEBI" id="CHEBI:18420"/>
    </cofactor>
    <text evidence="1">Binds 1 Mg(2+) ion per subunit.</text>
</comment>
<comment type="cofactor">
    <cofactor evidence="1">
        <name>thiamine diphosphate</name>
        <dbReference type="ChEBI" id="CHEBI:58937"/>
    </cofactor>
    <text evidence="1">Binds 1 thiamine pyrophosphate per subunit.</text>
</comment>
<comment type="pathway">
    <text evidence="1">Metabolic intermediate biosynthesis; 1-deoxy-D-xylulose 5-phosphate biosynthesis; 1-deoxy-D-xylulose 5-phosphate from D-glyceraldehyde 3-phosphate and pyruvate: step 1/1.</text>
</comment>
<comment type="subunit">
    <text evidence="1">Homodimer.</text>
</comment>
<comment type="similarity">
    <text evidence="1">Belongs to the transketolase family. DXPS subfamily.</text>
</comment>
<keyword id="KW-0414">Isoprene biosynthesis</keyword>
<keyword id="KW-0460">Magnesium</keyword>
<keyword id="KW-0479">Metal-binding</keyword>
<keyword id="KW-1185">Reference proteome</keyword>
<keyword id="KW-0784">Thiamine biosynthesis</keyword>
<keyword id="KW-0786">Thiamine pyrophosphate</keyword>
<keyword id="KW-0808">Transferase</keyword>
<organism>
    <name type="scientific">Streptomyces coelicolor (strain ATCC BAA-471 / A3(2) / M145)</name>
    <dbReference type="NCBI Taxonomy" id="100226"/>
    <lineage>
        <taxon>Bacteria</taxon>
        <taxon>Bacillati</taxon>
        <taxon>Actinomycetota</taxon>
        <taxon>Actinomycetes</taxon>
        <taxon>Kitasatosporales</taxon>
        <taxon>Streptomycetaceae</taxon>
        <taxon>Streptomyces</taxon>
        <taxon>Streptomyces albidoflavus group</taxon>
    </lineage>
</organism>
<dbReference type="EC" id="2.2.1.7" evidence="1"/>
<dbReference type="EMBL" id="AL939126">
    <property type="protein sequence ID" value="CAD55365.1"/>
    <property type="molecule type" value="Genomic_DNA"/>
</dbReference>
<dbReference type="RefSeq" id="NP_733683.1">
    <property type="nucleotide sequence ID" value="NC_003888.3"/>
</dbReference>
<dbReference type="SMR" id="Q8CJP7"/>
<dbReference type="FunCoup" id="Q8CJP7">
    <property type="interactions" value="234"/>
</dbReference>
<dbReference type="STRING" id="100226.gene:17763673"/>
<dbReference type="PaxDb" id="100226-SCO6013"/>
<dbReference type="KEGG" id="sco:SCO6013"/>
<dbReference type="PATRIC" id="fig|100226.15.peg.6112"/>
<dbReference type="eggNOG" id="COG1154">
    <property type="taxonomic scope" value="Bacteria"/>
</dbReference>
<dbReference type="HOGENOM" id="CLU_009227_1_4_11"/>
<dbReference type="InParanoid" id="Q8CJP7"/>
<dbReference type="OrthoDB" id="9803371at2"/>
<dbReference type="PhylomeDB" id="Q8CJP7"/>
<dbReference type="UniPathway" id="UPA00064">
    <property type="reaction ID" value="UER00091"/>
</dbReference>
<dbReference type="Proteomes" id="UP000001973">
    <property type="component" value="Chromosome"/>
</dbReference>
<dbReference type="GO" id="GO:0005829">
    <property type="term" value="C:cytosol"/>
    <property type="evidence" value="ECO:0000318"/>
    <property type="project" value="GO_Central"/>
</dbReference>
<dbReference type="GO" id="GO:0008661">
    <property type="term" value="F:1-deoxy-D-xylulose-5-phosphate synthase activity"/>
    <property type="evidence" value="ECO:0000318"/>
    <property type="project" value="GO_Central"/>
</dbReference>
<dbReference type="GO" id="GO:0000287">
    <property type="term" value="F:magnesium ion binding"/>
    <property type="evidence" value="ECO:0007669"/>
    <property type="project" value="UniProtKB-UniRule"/>
</dbReference>
<dbReference type="GO" id="GO:0030976">
    <property type="term" value="F:thiamine pyrophosphate binding"/>
    <property type="evidence" value="ECO:0007669"/>
    <property type="project" value="UniProtKB-UniRule"/>
</dbReference>
<dbReference type="GO" id="GO:0052865">
    <property type="term" value="P:1-deoxy-D-xylulose 5-phosphate biosynthetic process"/>
    <property type="evidence" value="ECO:0007669"/>
    <property type="project" value="UniProtKB-UniPathway"/>
</dbReference>
<dbReference type="GO" id="GO:0019288">
    <property type="term" value="P:isopentenyl diphosphate biosynthetic process, methylerythritol 4-phosphate pathway"/>
    <property type="evidence" value="ECO:0000318"/>
    <property type="project" value="GO_Central"/>
</dbReference>
<dbReference type="GO" id="GO:0016114">
    <property type="term" value="P:terpenoid biosynthetic process"/>
    <property type="evidence" value="ECO:0007669"/>
    <property type="project" value="UniProtKB-UniRule"/>
</dbReference>
<dbReference type="GO" id="GO:0009228">
    <property type="term" value="P:thiamine biosynthetic process"/>
    <property type="evidence" value="ECO:0007669"/>
    <property type="project" value="UniProtKB-UniRule"/>
</dbReference>
<dbReference type="CDD" id="cd02007">
    <property type="entry name" value="TPP_DXS"/>
    <property type="match status" value="1"/>
</dbReference>
<dbReference type="CDD" id="cd07033">
    <property type="entry name" value="TPP_PYR_DXS_TK_like"/>
    <property type="match status" value="1"/>
</dbReference>
<dbReference type="FunFam" id="3.40.50.920:FF:000002">
    <property type="entry name" value="1-deoxy-D-xylulose-5-phosphate synthase"/>
    <property type="match status" value="1"/>
</dbReference>
<dbReference type="FunFam" id="3.40.50.970:FF:000005">
    <property type="entry name" value="1-deoxy-D-xylulose-5-phosphate synthase"/>
    <property type="match status" value="1"/>
</dbReference>
<dbReference type="Gene3D" id="3.40.50.920">
    <property type="match status" value="1"/>
</dbReference>
<dbReference type="Gene3D" id="3.40.50.970">
    <property type="match status" value="2"/>
</dbReference>
<dbReference type="HAMAP" id="MF_00315">
    <property type="entry name" value="DXP_synth"/>
    <property type="match status" value="1"/>
</dbReference>
<dbReference type="InterPro" id="IPR005477">
    <property type="entry name" value="Dxylulose-5-P_synthase"/>
</dbReference>
<dbReference type="InterPro" id="IPR029061">
    <property type="entry name" value="THDP-binding"/>
</dbReference>
<dbReference type="InterPro" id="IPR009014">
    <property type="entry name" value="Transketo_C/PFOR_II"/>
</dbReference>
<dbReference type="InterPro" id="IPR005475">
    <property type="entry name" value="Transketolase-like_Pyr-bd"/>
</dbReference>
<dbReference type="InterPro" id="IPR020826">
    <property type="entry name" value="Transketolase_BS"/>
</dbReference>
<dbReference type="InterPro" id="IPR033248">
    <property type="entry name" value="Transketolase_C"/>
</dbReference>
<dbReference type="InterPro" id="IPR049557">
    <property type="entry name" value="Transketolase_CS"/>
</dbReference>
<dbReference type="NCBIfam" id="TIGR00204">
    <property type="entry name" value="dxs"/>
    <property type="match status" value="1"/>
</dbReference>
<dbReference type="NCBIfam" id="NF003933">
    <property type="entry name" value="PRK05444.2-2"/>
    <property type="match status" value="1"/>
</dbReference>
<dbReference type="PANTHER" id="PTHR43322">
    <property type="entry name" value="1-D-DEOXYXYLULOSE 5-PHOSPHATE SYNTHASE-RELATED"/>
    <property type="match status" value="1"/>
</dbReference>
<dbReference type="PANTHER" id="PTHR43322:SF5">
    <property type="entry name" value="1-DEOXY-D-XYLULOSE-5-PHOSPHATE SYNTHASE, CHLOROPLASTIC"/>
    <property type="match status" value="1"/>
</dbReference>
<dbReference type="Pfam" id="PF13292">
    <property type="entry name" value="DXP_synthase_N"/>
    <property type="match status" value="1"/>
</dbReference>
<dbReference type="Pfam" id="PF02779">
    <property type="entry name" value="Transket_pyr"/>
    <property type="match status" value="1"/>
</dbReference>
<dbReference type="Pfam" id="PF02780">
    <property type="entry name" value="Transketolase_C"/>
    <property type="match status" value="1"/>
</dbReference>
<dbReference type="SMART" id="SM00861">
    <property type="entry name" value="Transket_pyr"/>
    <property type="match status" value="1"/>
</dbReference>
<dbReference type="SUPFAM" id="SSF52518">
    <property type="entry name" value="Thiamin diphosphate-binding fold (THDP-binding)"/>
    <property type="match status" value="2"/>
</dbReference>
<dbReference type="SUPFAM" id="SSF52922">
    <property type="entry name" value="TK C-terminal domain-like"/>
    <property type="match status" value="1"/>
</dbReference>
<dbReference type="PROSITE" id="PS00801">
    <property type="entry name" value="TRANSKETOLASE_1"/>
    <property type="match status" value="1"/>
</dbReference>
<dbReference type="PROSITE" id="PS00802">
    <property type="entry name" value="TRANSKETOLASE_2"/>
    <property type="match status" value="1"/>
</dbReference>
<feature type="chain" id="PRO_0000189158" description="1-deoxy-D-xylulose-5-phosphate synthase 2">
    <location>
        <begin position="1"/>
        <end position="642"/>
    </location>
</feature>
<feature type="binding site" evidence="1">
    <location>
        <position position="73"/>
    </location>
    <ligand>
        <name>thiamine diphosphate</name>
        <dbReference type="ChEBI" id="CHEBI:58937"/>
    </ligand>
</feature>
<feature type="binding site" evidence="1">
    <location>
        <begin position="113"/>
        <end position="115"/>
    </location>
    <ligand>
        <name>thiamine diphosphate</name>
        <dbReference type="ChEBI" id="CHEBI:58937"/>
    </ligand>
</feature>
<feature type="binding site" evidence="1">
    <location>
        <position position="144"/>
    </location>
    <ligand>
        <name>Mg(2+)</name>
        <dbReference type="ChEBI" id="CHEBI:18420"/>
    </ligand>
</feature>
<feature type="binding site" evidence="1">
    <location>
        <begin position="145"/>
        <end position="146"/>
    </location>
    <ligand>
        <name>thiamine diphosphate</name>
        <dbReference type="ChEBI" id="CHEBI:58937"/>
    </ligand>
</feature>
<feature type="binding site" evidence="1">
    <location>
        <position position="174"/>
    </location>
    <ligand>
        <name>Mg(2+)</name>
        <dbReference type="ChEBI" id="CHEBI:18420"/>
    </ligand>
</feature>
<feature type="binding site" evidence="1">
    <location>
        <position position="174"/>
    </location>
    <ligand>
        <name>thiamine diphosphate</name>
        <dbReference type="ChEBI" id="CHEBI:58937"/>
    </ligand>
</feature>
<feature type="binding site" evidence="1">
    <location>
        <position position="285"/>
    </location>
    <ligand>
        <name>thiamine diphosphate</name>
        <dbReference type="ChEBI" id="CHEBI:58937"/>
    </ligand>
</feature>
<feature type="binding site" evidence="1">
    <location>
        <position position="366"/>
    </location>
    <ligand>
        <name>thiamine diphosphate</name>
        <dbReference type="ChEBI" id="CHEBI:58937"/>
    </ligand>
</feature>
<sequence>MPLLTRITGPRDLDRLSLEELTQLAEEIRTFLVDAVSKTGGHLGPNLGVVELTLALHRVFESPKDKVLWDTGHQSYVHKLLTGRQDFSKLKMKGGLSGYPSQGESEHDVIENSHASTVLGWADGIAKANQVMERDDHVVAVIGDGALTGGMAWEALNNIAAAKDRPLVIVVNDNERSYAPTIGGLANHLATLRTTDGYERFLARTKEVLERTPVVGRPLYDTLHGAKKGLKDFIAPQGMFEDLGLKYVGPIDGHDLEALESALTRAKRFGGPVIVHCLTEKGRGYQPALQDEADRFHAVGKIHPDTGLPISTSGADWTSVFGDEMLKLGKEREDVVAITAAMLQPVGLDKFAKAFPDRVYDVGIAEQHGAVSAAGLAHGGVHPVFAVYATFLNRAFDQVLMDVALHKCGVTFVLDRAGVTGTDGASHNGMWDMSILQVVPGLRLAAPRDADQVRAQLREAVVVDDAPTVVRFSKGAVGPAVPAVGRVGGMDVLRAPGTGTPDVLLVSVGALAPMCLEVADLLNKQGISTTVVDPRWVKPVDEAMAPLAERHRVVVTVEDNSRVGGVGSAVAQALRDAGVDVPLRDFGIPPRFLDHASRAEVLAEIGLTAPDIARQVTGLVARLDGRYDRAGAEVDQVEAARD</sequence>